<accession>P50140</accession>
<accession>Q965Q0</accession>
<comment type="function">
    <text evidence="1">Implicated in mitochondrial protein import and macromolecular assembly. May facilitate the correct folding of imported proteins. May also prevent misfolding and promote the refolding and proper assembly of unfolded polypeptides generated under stress conditions in the mitochondrial matrix (By similarity).</text>
</comment>
<comment type="subcellular location">
    <subcellularLocation>
        <location>Mitochondrion matrix</location>
    </subcellularLocation>
</comment>
<comment type="induction">
    <text evidence="3">By mitochondrial stress.</text>
</comment>
<comment type="similarity">
    <text evidence="4">Belongs to the chaperonin (HSP60) family.</text>
</comment>
<dbReference type="EMBL" id="L36035">
    <property type="protein sequence ID" value="AAA28077.1"/>
    <property type="molecule type" value="mRNA"/>
</dbReference>
<dbReference type="EMBL" id="FO081783">
    <property type="protein sequence ID" value="CCD73746.1"/>
    <property type="molecule type" value="Genomic_DNA"/>
</dbReference>
<dbReference type="RefSeq" id="NP_497429.1">
    <property type="nucleotide sequence ID" value="NM_065028.8"/>
</dbReference>
<dbReference type="SMR" id="P50140"/>
<dbReference type="BioGRID" id="40572">
    <property type="interactions" value="53"/>
</dbReference>
<dbReference type="FunCoup" id="P50140">
    <property type="interactions" value="1813"/>
</dbReference>
<dbReference type="IntAct" id="P50140">
    <property type="interactions" value="3"/>
</dbReference>
<dbReference type="STRING" id="6239.Y22D7AL.5a.1"/>
<dbReference type="PaxDb" id="6239-Y22D7AL.5a.2"/>
<dbReference type="PeptideAtlas" id="P50140"/>
<dbReference type="EnsemblMetazoa" id="Y22D7AL.5a.1">
    <property type="protein sequence ID" value="Y22D7AL.5a.1"/>
    <property type="gene ID" value="WBGene00002025"/>
</dbReference>
<dbReference type="EnsemblMetazoa" id="Y22D7AL.5a.2">
    <property type="protein sequence ID" value="Y22D7AL.5a.2"/>
    <property type="gene ID" value="WBGene00002025"/>
</dbReference>
<dbReference type="GeneID" id="175316"/>
<dbReference type="KEGG" id="cel:CELE_Y22D7AL.5"/>
<dbReference type="AGR" id="WB:WBGene00002025"/>
<dbReference type="CTD" id="175316"/>
<dbReference type="WormBase" id="Y22D7AL.5a">
    <property type="protein sequence ID" value="CE27244"/>
    <property type="gene ID" value="WBGene00002025"/>
    <property type="gene designation" value="hsp-60"/>
</dbReference>
<dbReference type="eggNOG" id="KOG0356">
    <property type="taxonomic scope" value="Eukaryota"/>
</dbReference>
<dbReference type="HOGENOM" id="CLU_016503_3_0_1"/>
<dbReference type="InParanoid" id="P50140"/>
<dbReference type="OMA" id="TDTDKME"/>
<dbReference type="OrthoDB" id="1733909at2759"/>
<dbReference type="PhylomeDB" id="P50140"/>
<dbReference type="Reactome" id="R-CEL-9837999">
    <property type="pathway name" value="Mitochondrial protein degradation"/>
</dbReference>
<dbReference type="PRO" id="PR:P50140"/>
<dbReference type="Proteomes" id="UP000001940">
    <property type="component" value="Chromosome III"/>
</dbReference>
<dbReference type="Bgee" id="WBGene00002025">
    <property type="expression patterns" value="Expressed in pharyngeal muscle cell (C elegans) and 4 other cell types or tissues"/>
</dbReference>
<dbReference type="ExpressionAtlas" id="P50140">
    <property type="expression patterns" value="baseline and differential"/>
</dbReference>
<dbReference type="GO" id="GO:0005743">
    <property type="term" value="C:mitochondrial inner membrane"/>
    <property type="evidence" value="ECO:0000318"/>
    <property type="project" value="GO_Central"/>
</dbReference>
<dbReference type="GO" id="GO:0005759">
    <property type="term" value="C:mitochondrial matrix"/>
    <property type="evidence" value="ECO:0000318"/>
    <property type="project" value="GO_Central"/>
</dbReference>
<dbReference type="GO" id="GO:0005739">
    <property type="term" value="C:mitochondrion"/>
    <property type="evidence" value="ECO:0000314"/>
    <property type="project" value="WormBase"/>
</dbReference>
<dbReference type="GO" id="GO:0005524">
    <property type="term" value="F:ATP binding"/>
    <property type="evidence" value="ECO:0007669"/>
    <property type="project" value="UniProtKB-KW"/>
</dbReference>
<dbReference type="GO" id="GO:0140662">
    <property type="term" value="F:ATP-dependent protein folding chaperone"/>
    <property type="evidence" value="ECO:0007669"/>
    <property type="project" value="InterPro"/>
</dbReference>
<dbReference type="GO" id="GO:0051087">
    <property type="term" value="F:protein-folding chaperone binding"/>
    <property type="evidence" value="ECO:0000318"/>
    <property type="project" value="GO_Central"/>
</dbReference>
<dbReference type="GO" id="GO:0061629">
    <property type="term" value="F:RNA polymerase II-specific DNA-binding transcription factor binding"/>
    <property type="evidence" value="ECO:0000353"/>
    <property type="project" value="WormBase"/>
</dbReference>
<dbReference type="GO" id="GO:0008637">
    <property type="term" value="P:apoptotic mitochondrial changes"/>
    <property type="evidence" value="ECO:0000318"/>
    <property type="project" value="GO_Central"/>
</dbReference>
<dbReference type="GO" id="GO:0009792">
    <property type="term" value="P:embryo development ending in birth or egg hatching"/>
    <property type="evidence" value="ECO:0000315"/>
    <property type="project" value="WormBase"/>
</dbReference>
<dbReference type="GO" id="GO:0034514">
    <property type="term" value="P:mitochondrial unfolded protein response"/>
    <property type="evidence" value="ECO:0000315"/>
    <property type="project" value="WormBase"/>
</dbReference>
<dbReference type="GO" id="GO:0007005">
    <property type="term" value="P:mitochondrion organization"/>
    <property type="evidence" value="ECO:0000315"/>
    <property type="project" value="WormBase"/>
</dbReference>
<dbReference type="GO" id="GO:0002119">
    <property type="term" value="P:nematode larval development"/>
    <property type="evidence" value="ECO:0000315"/>
    <property type="project" value="WormBase"/>
</dbReference>
<dbReference type="GO" id="GO:0006457">
    <property type="term" value="P:protein folding"/>
    <property type="evidence" value="ECO:0000318"/>
    <property type="project" value="GO_Central"/>
</dbReference>
<dbReference type="GO" id="GO:0045041">
    <property type="term" value="P:protein import into mitochondrial intermembrane space"/>
    <property type="evidence" value="ECO:0000318"/>
    <property type="project" value="GO_Central"/>
</dbReference>
<dbReference type="GO" id="GO:0042026">
    <property type="term" value="P:protein refolding"/>
    <property type="evidence" value="ECO:0007669"/>
    <property type="project" value="InterPro"/>
</dbReference>
<dbReference type="CDD" id="cd03344">
    <property type="entry name" value="GroEL"/>
    <property type="match status" value="1"/>
</dbReference>
<dbReference type="FunFam" id="3.50.7.10:FF:000001">
    <property type="entry name" value="60 kDa chaperonin"/>
    <property type="match status" value="1"/>
</dbReference>
<dbReference type="FunFam" id="3.30.260.10:FF:000019">
    <property type="entry name" value="60 kDa heat shock mitochondrial"/>
    <property type="match status" value="1"/>
</dbReference>
<dbReference type="FunFam" id="1.10.560.10:FF:000031">
    <property type="entry name" value="60 kDa heat shock protein, mitochondrial"/>
    <property type="match status" value="1"/>
</dbReference>
<dbReference type="FunFam" id="1.10.560.10:FF:000026">
    <property type="entry name" value="Chaperonin 60 subunit alpha 2 chloroplastic"/>
    <property type="match status" value="1"/>
</dbReference>
<dbReference type="Gene3D" id="3.50.7.10">
    <property type="entry name" value="GroEL"/>
    <property type="match status" value="1"/>
</dbReference>
<dbReference type="Gene3D" id="1.10.560.10">
    <property type="entry name" value="GroEL-like equatorial domain"/>
    <property type="match status" value="1"/>
</dbReference>
<dbReference type="Gene3D" id="3.30.260.10">
    <property type="entry name" value="TCP-1-like chaperonin intermediate domain"/>
    <property type="match status" value="1"/>
</dbReference>
<dbReference type="HAMAP" id="MF_00600">
    <property type="entry name" value="CH60"/>
    <property type="match status" value="1"/>
</dbReference>
<dbReference type="InterPro" id="IPR018370">
    <property type="entry name" value="Chaperonin_Cpn60_CS"/>
</dbReference>
<dbReference type="InterPro" id="IPR001844">
    <property type="entry name" value="Cpn60/GroEL"/>
</dbReference>
<dbReference type="InterPro" id="IPR002423">
    <property type="entry name" value="Cpn60/GroEL/TCP-1"/>
</dbReference>
<dbReference type="InterPro" id="IPR027409">
    <property type="entry name" value="GroEL-like_apical_dom_sf"/>
</dbReference>
<dbReference type="InterPro" id="IPR027413">
    <property type="entry name" value="GROEL-like_equatorial_sf"/>
</dbReference>
<dbReference type="InterPro" id="IPR027410">
    <property type="entry name" value="TCP-1-like_intermed_sf"/>
</dbReference>
<dbReference type="NCBIfam" id="TIGR02348">
    <property type="entry name" value="GroEL"/>
    <property type="match status" value="1"/>
</dbReference>
<dbReference type="NCBIfam" id="NF000592">
    <property type="entry name" value="PRK00013.1"/>
    <property type="match status" value="1"/>
</dbReference>
<dbReference type="NCBIfam" id="NF009487">
    <property type="entry name" value="PRK12849.1"/>
    <property type="match status" value="1"/>
</dbReference>
<dbReference type="NCBIfam" id="NF009488">
    <property type="entry name" value="PRK12850.1"/>
    <property type="match status" value="1"/>
</dbReference>
<dbReference type="NCBIfam" id="NF009489">
    <property type="entry name" value="PRK12851.1"/>
    <property type="match status" value="1"/>
</dbReference>
<dbReference type="PANTHER" id="PTHR45633">
    <property type="entry name" value="60 KDA HEAT SHOCK PROTEIN, MITOCHONDRIAL"/>
    <property type="match status" value="1"/>
</dbReference>
<dbReference type="Pfam" id="PF00118">
    <property type="entry name" value="Cpn60_TCP1"/>
    <property type="match status" value="1"/>
</dbReference>
<dbReference type="PRINTS" id="PR00298">
    <property type="entry name" value="CHAPERONIN60"/>
</dbReference>
<dbReference type="SUPFAM" id="SSF52029">
    <property type="entry name" value="GroEL apical domain-like"/>
    <property type="match status" value="1"/>
</dbReference>
<dbReference type="SUPFAM" id="SSF48592">
    <property type="entry name" value="GroEL equatorial domain-like"/>
    <property type="match status" value="1"/>
</dbReference>
<dbReference type="SUPFAM" id="SSF54849">
    <property type="entry name" value="GroEL-intermediate domain like"/>
    <property type="match status" value="1"/>
</dbReference>
<dbReference type="PROSITE" id="PS00296">
    <property type="entry name" value="CHAPERONINS_CPN60"/>
    <property type="match status" value="1"/>
</dbReference>
<keyword id="KW-0067">ATP-binding</keyword>
<keyword id="KW-0143">Chaperone</keyword>
<keyword id="KW-0496">Mitochondrion</keyword>
<keyword id="KW-0547">Nucleotide-binding</keyword>
<keyword id="KW-1185">Reference proteome</keyword>
<keyword id="KW-0809">Transit peptide</keyword>
<sequence length="568" mass="60101">MLRLARKGLQTAVVRSYAKDVKFGAEGRQAMLVGVNLLADAVSVTMGPKGRNVIIEQSWGSPKITKDGVTVAKSIDLKDKYQNLGAKLIQDVANKANEEAGDGTTCATVLARAIAKEGFESIRQGGNAVEIRRGVMNAVEVVVAELKKISKKVTTPEEIAQVATISANGDTVVGNLISDAMKKVGTTGVITVKDGKTLNDELELIEGMKFDRGYISPYFITSAKGAKVEYEKALVLLSEKKISQVQDIVPALELANKLRRPLVIIAEDVDGEALTTLVLNRLKVGLQVVAIKAPGFGDNRKNTLKDMGIATGATIFGDDSNLIKIEDITANDLGEVDEVTITKDDTLLLRGRGDQTEIEKRIEHITDEIEQSTSDYEKEKLNERLAKLSKGVAVLKIGGGSEVEVGEKKDRVTDALCATRAAVEEGIVPGGGVALLRSLTALKNYKAANEDQQIGVNIVKKALTQPIATIVKNAGLEPSSIIDEVTGNSNTSYGYDALNGKFVDMFEAGIIDPTKVVRTALQDASGVASLLATTECVVTEIPKEEAVGGPAGGMGGMGGMGGMGGMGF</sequence>
<organism>
    <name type="scientific">Caenorhabditis elegans</name>
    <dbReference type="NCBI Taxonomy" id="6239"/>
    <lineage>
        <taxon>Eukaryota</taxon>
        <taxon>Metazoa</taxon>
        <taxon>Ecdysozoa</taxon>
        <taxon>Nematoda</taxon>
        <taxon>Chromadorea</taxon>
        <taxon>Rhabditida</taxon>
        <taxon>Rhabditina</taxon>
        <taxon>Rhabditomorpha</taxon>
        <taxon>Rhabditoidea</taxon>
        <taxon>Rhabditidae</taxon>
        <taxon>Peloderinae</taxon>
        <taxon>Caenorhabditis</taxon>
    </lineage>
</organism>
<gene>
    <name type="primary">hsp-60</name>
    <name type="synonym">hsp60</name>
    <name type="ORF">Y22D7AL.5</name>
</gene>
<feature type="transit peptide" description="Mitochondrion" evidence="2">
    <location>
        <begin position="1"/>
        <end status="unknown"/>
    </location>
</feature>
<feature type="chain" id="PRO_0000005030" description="Chaperonin homolog Hsp-60, mitochondrial">
    <location>
        <begin status="unknown"/>
        <end position="568"/>
    </location>
</feature>
<feature type="sequence conflict" description="In Ref. 1; AAA28077." evidence="4" ref="1">
    <original>A</original>
    <variation>T</variation>
    <location>
        <position position="111"/>
    </location>
</feature>
<feature type="sequence conflict" description="In Ref. 1; AAA28077." evidence="4" ref="1">
    <original>SIRQG</original>
    <variation>RHSSR</variation>
    <location>
        <begin position="121"/>
        <end position="125"/>
    </location>
</feature>
<feature type="sequence conflict" description="In Ref. 1; AAA28077." evidence="4" ref="1">
    <original>E</original>
    <variation>Q</variation>
    <location>
        <position position="201"/>
    </location>
</feature>
<feature type="sequence conflict" description="In Ref. 1; AAA28077." evidence="4" ref="1">
    <original>T</original>
    <variation>A</variation>
    <location>
        <position position="303"/>
    </location>
</feature>
<feature type="sequence conflict" description="In Ref. 1; AAA28077." evidence="4" ref="1">
    <original>T</original>
    <variation>S</variation>
    <location>
        <position position="314"/>
    </location>
</feature>
<feature type="sequence conflict" description="In Ref. 1; AAA28077." evidence="4" ref="1">
    <original>DSNLIKI</original>
    <variation>ETLDLRL</variation>
    <location>
        <begin position="319"/>
        <end position="325"/>
    </location>
</feature>
<feature type="sequence conflict" description="In Ref. 1; AAA28077." evidence="4" ref="1">
    <original>H</original>
    <variation>E</variation>
    <location>
        <position position="364"/>
    </location>
</feature>
<feature type="sequence conflict" description="In Ref. 1; AAA28077." evidence="4" ref="1">
    <original>Q</original>
    <variation>R</variation>
    <location>
        <position position="371"/>
    </location>
</feature>
<name>CH60_CAEEL</name>
<proteinExistence type="evidence at transcript level"/>
<evidence type="ECO:0000250" key="1"/>
<evidence type="ECO:0000255" key="2"/>
<evidence type="ECO:0000269" key="3">
    <source>
    </source>
</evidence>
<evidence type="ECO:0000305" key="4"/>
<protein>
    <recommendedName>
        <fullName>Chaperonin homolog Hsp-60, mitochondrial</fullName>
    </recommendedName>
    <alternativeName>
        <fullName>Heat shock protein 60</fullName>
        <shortName>HSP-60</shortName>
    </alternativeName>
</protein>
<reference key="1">
    <citation type="submission" date="1994-09" db="EMBL/GenBank/DDBJ databases">
        <authorList>
            <person name="Musso G."/>
            <person name="la Volpe A."/>
        </authorList>
    </citation>
    <scope>NUCLEOTIDE SEQUENCE [MRNA]</scope>
    <source>
        <strain>CB1392</strain>
    </source>
</reference>
<reference key="2">
    <citation type="journal article" date="1998" name="Science">
        <title>Genome sequence of the nematode C. elegans: a platform for investigating biology.</title>
        <authorList>
            <consortium name="The C. elegans sequencing consortium"/>
        </authorList>
    </citation>
    <scope>NUCLEOTIDE SEQUENCE [LARGE SCALE GENOMIC DNA]</scope>
    <source>
        <strain>Bristol N2</strain>
    </source>
</reference>
<reference key="3">
    <citation type="journal article" date="2015" name="Mol. Cell">
        <title>Repression of the heat shock response is a programmed event at the onset of reproduction.</title>
        <authorList>
            <person name="Labbadia J."/>
            <person name="Morimoto R.I."/>
        </authorList>
    </citation>
    <scope>INDUCTION BY MITOCHONDRIAL STRESS</scope>
</reference>